<accession>A4YTA2</accession>
<keyword id="KW-0067">ATP-binding</keyword>
<keyword id="KW-0963">Cytoplasm</keyword>
<keyword id="KW-0418">Kinase</keyword>
<keyword id="KW-0460">Magnesium</keyword>
<keyword id="KW-0479">Metal-binding</keyword>
<keyword id="KW-0546">Nucleotide metabolism</keyword>
<keyword id="KW-0547">Nucleotide-binding</keyword>
<keyword id="KW-0597">Phosphoprotein</keyword>
<keyword id="KW-1185">Reference proteome</keyword>
<keyword id="KW-0808">Transferase</keyword>
<name>NDK_BRASO</name>
<protein>
    <recommendedName>
        <fullName evidence="1">Nucleoside diphosphate kinase</fullName>
        <shortName evidence="1">NDK</shortName>
        <shortName evidence="1">NDP kinase</shortName>
        <ecNumber evidence="1">2.7.4.6</ecNumber>
    </recommendedName>
    <alternativeName>
        <fullName evidence="1">Nucleoside-2-P kinase</fullName>
    </alternativeName>
</protein>
<feature type="chain" id="PRO_1000026210" description="Nucleoside diphosphate kinase">
    <location>
        <begin position="1"/>
        <end position="140"/>
    </location>
</feature>
<feature type="active site" description="Pros-phosphohistidine intermediate" evidence="1">
    <location>
        <position position="117"/>
    </location>
</feature>
<feature type="binding site" evidence="1">
    <location>
        <position position="11"/>
    </location>
    <ligand>
        <name>ATP</name>
        <dbReference type="ChEBI" id="CHEBI:30616"/>
    </ligand>
</feature>
<feature type="binding site" evidence="1">
    <location>
        <position position="59"/>
    </location>
    <ligand>
        <name>ATP</name>
        <dbReference type="ChEBI" id="CHEBI:30616"/>
    </ligand>
</feature>
<feature type="binding site" evidence="1">
    <location>
        <position position="87"/>
    </location>
    <ligand>
        <name>ATP</name>
        <dbReference type="ChEBI" id="CHEBI:30616"/>
    </ligand>
</feature>
<feature type="binding site" evidence="1">
    <location>
        <position position="93"/>
    </location>
    <ligand>
        <name>ATP</name>
        <dbReference type="ChEBI" id="CHEBI:30616"/>
    </ligand>
</feature>
<feature type="binding site" evidence="1">
    <location>
        <position position="104"/>
    </location>
    <ligand>
        <name>ATP</name>
        <dbReference type="ChEBI" id="CHEBI:30616"/>
    </ligand>
</feature>
<feature type="binding site" evidence="1">
    <location>
        <position position="114"/>
    </location>
    <ligand>
        <name>ATP</name>
        <dbReference type="ChEBI" id="CHEBI:30616"/>
    </ligand>
</feature>
<comment type="function">
    <text evidence="1">Major role in the synthesis of nucleoside triphosphates other than ATP. The ATP gamma phosphate is transferred to the NDP beta phosphate via a ping-pong mechanism, using a phosphorylated active-site intermediate.</text>
</comment>
<comment type="catalytic activity">
    <reaction evidence="1">
        <text>a 2'-deoxyribonucleoside 5'-diphosphate + ATP = a 2'-deoxyribonucleoside 5'-triphosphate + ADP</text>
        <dbReference type="Rhea" id="RHEA:44640"/>
        <dbReference type="ChEBI" id="CHEBI:30616"/>
        <dbReference type="ChEBI" id="CHEBI:61560"/>
        <dbReference type="ChEBI" id="CHEBI:73316"/>
        <dbReference type="ChEBI" id="CHEBI:456216"/>
        <dbReference type="EC" id="2.7.4.6"/>
    </reaction>
</comment>
<comment type="catalytic activity">
    <reaction evidence="1">
        <text>a ribonucleoside 5'-diphosphate + ATP = a ribonucleoside 5'-triphosphate + ADP</text>
        <dbReference type="Rhea" id="RHEA:18113"/>
        <dbReference type="ChEBI" id="CHEBI:30616"/>
        <dbReference type="ChEBI" id="CHEBI:57930"/>
        <dbReference type="ChEBI" id="CHEBI:61557"/>
        <dbReference type="ChEBI" id="CHEBI:456216"/>
        <dbReference type="EC" id="2.7.4.6"/>
    </reaction>
</comment>
<comment type="cofactor">
    <cofactor evidence="1">
        <name>Mg(2+)</name>
        <dbReference type="ChEBI" id="CHEBI:18420"/>
    </cofactor>
</comment>
<comment type="subunit">
    <text evidence="1">Homotetramer.</text>
</comment>
<comment type="subcellular location">
    <subcellularLocation>
        <location evidence="1">Cytoplasm</location>
    </subcellularLocation>
</comment>
<comment type="similarity">
    <text evidence="1">Belongs to the NDK family.</text>
</comment>
<evidence type="ECO:0000255" key="1">
    <source>
        <dbReference type="HAMAP-Rule" id="MF_00451"/>
    </source>
</evidence>
<sequence>MAIERTFSIIKPDATERNLTGAINALIEKAGLRIVAQKRIRMTRDQAETFYAVHKARPFFGELVDFMISGPVVVQVLEGEGAILKYRDVMGATDPSKAAEGTIRKAHAKSIGENSVHGSDAPETAAIEIAQFFAGNEIVG</sequence>
<proteinExistence type="inferred from homology"/>
<dbReference type="EC" id="2.7.4.6" evidence="1"/>
<dbReference type="EMBL" id="CU234118">
    <property type="protein sequence ID" value="CAL77128.1"/>
    <property type="molecule type" value="Genomic_DNA"/>
</dbReference>
<dbReference type="RefSeq" id="WP_011926284.1">
    <property type="nucleotide sequence ID" value="NC_009445.1"/>
</dbReference>
<dbReference type="SMR" id="A4YTA2"/>
<dbReference type="STRING" id="114615.BRADO3334"/>
<dbReference type="KEGG" id="bra:BRADO3334"/>
<dbReference type="eggNOG" id="COG0105">
    <property type="taxonomic scope" value="Bacteria"/>
</dbReference>
<dbReference type="HOGENOM" id="CLU_060216_8_1_5"/>
<dbReference type="OrthoDB" id="9801161at2"/>
<dbReference type="Proteomes" id="UP000001994">
    <property type="component" value="Chromosome"/>
</dbReference>
<dbReference type="GO" id="GO:0005737">
    <property type="term" value="C:cytoplasm"/>
    <property type="evidence" value="ECO:0007669"/>
    <property type="project" value="UniProtKB-SubCell"/>
</dbReference>
<dbReference type="GO" id="GO:0005524">
    <property type="term" value="F:ATP binding"/>
    <property type="evidence" value="ECO:0007669"/>
    <property type="project" value="UniProtKB-UniRule"/>
</dbReference>
<dbReference type="GO" id="GO:0046872">
    <property type="term" value="F:metal ion binding"/>
    <property type="evidence" value="ECO:0007669"/>
    <property type="project" value="UniProtKB-KW"/>
</dbReference>
<dbReference type="GO" id="GO:0004550">
    <property type="term" value="F:nucleoside diphosphate kinase activity"/>
    <property type="evidence" value="ECO:0007669"/>
    <property type="project" value="UniProtKB-UniRule"/>
</dbReference>
<dbReference type="GO" id="GO:0006241">
    <property type="term" value="P:CTP biosynthetic process"/>
    <property type="evidence" value="ECO:0007669"/>
    <property type="project" value="UniProtKB-UniRule"/>
</dbReference>
<dbReference type="GO" id="GO:0006183">
    <property type="term" value="P:GTP biosynthetic process"/>
    <property type="evidence" value="ECO:0007669"/>
    <property type="project" value="UniProtKB-UniRule"/>
</dbReference>
<dbReference type="GO" id="GO:0006228">
    <property type="term" value="P:UTP biosynthetic process"/>
    <property type="evidence" value="ECO:0007669"/>
    <property type="project" value="UniProtKB-UniRule"/>
</dbReference>
<dbReference type="CDD" id="cd04413">
    <property type="entry name" value="NDPk_I"/>
    <property type="match status" value="1"/>
</dbReference>
<dbReference type="Gene3D" id="3.30.70.141">
    <property type="entry name" value="Nucleoside diphosphate kinase-like domain"/>
    <property type="match status" value="1"/>
</dbReference>
<dbReference type="HAMAP" id="MF_00451">
    <property type="entry name" value="NDP_kinase"/>
    <property type="match status" value="1"/>
</dbReference>
<dbReference type="InterPro" id="IPR034907">
    <property type="entry name" value="NDK-like_dom"/>
</dbReference>
<dbReference type="InterPro" id="IPR036850">
    <property type="entry name" value="NDK-like_dom_sf"/>
</dbReference>
<dbReference type="InterPro" id="IPR001564">
    <property type="entry name" value="Nucleoside_diP_kinase"/>
</dbReference>
<dbReference type="InterPro" id="IPR023005">
    <property type="entry name" value="Nucleoside_diP_kinase_AS"/>
</dbReference>
<dbReference type="NCBIfam" id="NF001908">
    <property type="entry name" value="PRK00668.1"/>
    <property type="match status" value="1"/>
</dbReference>
<dbReference type="PANTHER" id="PTHR46161">
    <property type="entry name" value="NUCLEOSIDE DIPHOSPHATE KINASE"/>
    <property type="match status" value="1"/>
</dbReference>
<dbReference type="PANTHER" id="PTHR46161:SF3">
    <property type="entry name" value="NUCLEOSIDE DIPHOSPHATE KINASE DDB_G0292928-RELATED"/>
    <property type="match status" value="1"/>
</dbReference>
<dbReference type="Pfam" id="PF00334">
    <property type="entry name" value="NDK"/>
    <property type="match status" value="1"/>
</dbReference>
<dbReference type="PRINTS" id="PR01243">
    <property type="entry name" value="NUCDPKINASE"/>
</dbReference>
<dbReference type="SMART" id="SM00562">
    <property type="entry name" value="NDK"/>
    <property type="match status" value="1"/>
</dbReference>
<dbReference type="SUPFAM" id="SSF54919">
    <property type="entry name" value="Nucleoside diphosphate kinase, NDK"/>
    <property type="match status" value="1"/>
</dbReference>
<dbReference type="PROSITE" id="PS00469">
    <property type="entry name" value="NDPK"/>
    <property type="match status" value="1"/>
</dbReference>
<dbReference type="PROSITE" id="PS51374">
    <property type="entry name" value="NDPK_LIKE"/>
    <property type="match status" value="1"/>
</dbReference>
<organism>
    <name type="scientific">Bradyrhizobium sp. (strain ORS 278)</name>
    <dbReference type="NCBI Taxonomy" id="114615"/>
    <lineage>
        <taxon>Bacteria</taxon>
        <taxon>Pseudomonadati</taxon>
        <taxon>Pseudomonadota</taxon>
        <taxon>Alphaproteobacteria</taxon>
        <taxon>Hyphomicrobiales</taxon>
        <taxon>Nitrobacteraceae</taxon>
        <taxon>Bradyrhizobium</taxon>
    </lineage>
</organism>
<gene>
    <name evidence="1" type="primary">ndk</name>
    <name type="ordered locus">BRADO3334</name>
</gene>
<reference key="1">
    <citation type="journal article" date="2007" name="Science">
        <title>Legumes symbioses: absence of nod genes in photosynthetic bradyrhizobia.</title>
        <authorList>
            <person name="Giraud E."/>
            <person name="Moulin L."/>
            <person name="Vallenet D."/>
            <person name="Barbe V."/>
            <person name="Cytryn E."/>
            <person name="Avarre J.-C."/>
            <person name="Jaubert M."/>
            <person name="Simon D."/>
            <person name="Cartieaux F."/>
            <person name="Prin Y."/>
            <person name="Bena G."/>
            <person name="Hannibal L."/>
            <person name="Fardoux J."/>
            <person name="Kojadinovic M."/>
            <person name="Vuillet L."/>
            <person name="Lajus A."/>
            <person name="Cruveiller S."/>
            <person name="Rouy Z."/>
            <person name="Mangenot S."/>
            <person name="Segurens B."/>
            <person name="Dossat C."/>
            <person name="Franck W.L."/>
            <person name="Chang W.-S."/>
            <person name="Saunders E."/>
            <person name="Bruce D."/>
            <person name="Richardson P."/>
            <person name="Normand P."/>
            <person name="Dreyfus B."/>
            <person name="Pignol D."/>
            <person name="Stacey G."/>
            <person name="Emerich D."/>
            <person name="Vermeglio A."/>
            <person name="Medigue C."/>
            <person name="Sadowsky M."/>
        </authorList>
    </citation>
    <scope>NUCLEOTIDE SEQUENCE [LARGE SCALE GENOMIC DNA]</scope>
    <source>
        <strain>ORS 278</strain>
    </source>
</reference>